<keyword id="KW-0004">4Fe-4S</keyword>
<keyword id="KW-0408">Iron</keyword>
<keyword id="KW-0411">Iron-sulfur</keyword>
<keyword id="KW-0479">Metal-binding</keyword>
<keyword id="KW-1185">Reference proteome</keyword>
<keyword id="KW-0677">Repeat</keyword>
<comment type="cofactor">
    <cofactor evidence="3">
        <name>[4Fe-4S] cluster</name>
        <dbReference type="ChEBI" id="CHEBI:49883"/>
    </cofactor>
    <text evidence="3">Binds 8 [4Fe-4S] clusters.</text>
</comment>
<dbReference type="EMBL" id="L77117">
    <property type="protein sequence ID" value="AAB99168.1"/>
    <property type="molecule type" value="Genomic_DNA"/>
</dbReference>
<dbReference type="PIR" id="E64445">
    <property type="entry name" value="E64445"/>
</dbReference>
<dbReference type="RefSeq" id="WP_010870679.1">
    <property type="nucleotide sequence ID" value="NC_000909.1"/>
</dbReference>
<dbReference type="SMR" id="Q58566"/>
<dbReference type="FunCoup" id="Q58566">
    <property type="interactions" value="92"/>
</dbReference>
<dbReference type="STRING" id="243232.MJ_1166"/>
<dbReference type="PaxDb" id="243232-MJ_1166"/>
<dbReference type="EnsemblBacteria" id="AAB99168">
    <property type="protein sequence ID" value="AAB99168"/>
    <property type="gene ID" value="MJ_1166"/>
</dbReference>
<dbReference type="GeneID" id="1452064"/>
<dbReference type="KEGG" id="mja:MJ_1166"/>
<dbReference type="eggNOG" id="arCOG02180">
    <property type="taxonomic scope" value="Archaea"/>
</dbReference>
<dbReference type="HOGENOM" id="CLU_050974_0_0_2"/>
<dbReference type="InParanoid" id="Q58566"/>
<dbReference type="OrthoDB" id="23833at2157"/>
<dbReference type="PhylomeDB" id="Q58566"/>
<dbReference type="Proteomes" id="UP000000805">
    <property type="component" value="Chromosome"/>
</dbReference>
<dbReference type="GO" id="GO:0051539">
    <property type="term" value="F:4 iron, 4 sulfur cluster binding"/>
    <property type="evidence" value="ECO:0007669"/>
    <property type="project" value="UniProtKB-KW"/>
</dbReference>
<dbReference type="GO" id="GO:0046872">
    <property type="term" value="F:metal ion binding"/>
    <property type="evidence" value="ECO:0007669"/>
    <property type="project" value="UniProtKB-KW"/>
</dbReference>
<dbReference type="GO" id="GO:0016491">
    <property type="term" value="F:oxidoreductase activity"/>
    <property type="evidence" value="ECO:0007669"/>
    <property type="project" value="UniProtKB-ARBA"/>
</dbReference>
<dbReference type="CDD" id="cd10549">
    <property type="entry name" value="MtMvhB_like"/>
    <property type="match status" value="2"/>
</dbReference>
<dbReference type="Gene3D" id="3.30.70.20">
    <property type="match status" value="5"/>
</dbReference>
<dbReference type="InterPro" id="IPR017896">
    <property type="entry name" value="4Fe4S_Fe-S-bd"/>
</dbReference>
<dbReference type="InterPro" id="IPR017900">
    <property type="entry name" value="4Fe4S_Fe_S_CS"/>
</dbReference>
<dbReference type="InterPro" id="IPR043256">
    <property type="entry name" value="MvhB-like"/>
</dbReference>
<dbReference type="InterPro" id="IPR053559">
    <property type="entry name" value="Polyferredoxin"/>
</dbReference>
<dbReference type="InterPro" id="IPR052977">
    <property type="entry name" value="Polyferredoxin-like_ET"/>
</dbReference>
<dbReference type="NCBIfam" id="NF042909">
    <property type="entry name" value="FMH_DH_FwdF"/>
    <property type="match status" value="1"/>
</dbReference>
<dbReference type="PANTHER" id="PTHR43193">
    <property type="match status" value="1"/>
</dbReference>
<dbReference type="PANTHER" id="PTHR43193:SF2">
    <property type="entry name" value="POLYFERREDOXIN PROTEIN FWDF"/>
    <property type="match status" value="1"/>
</dbReference>
<dbReference type="Pfam" id="PF00037">
    <property type="entry name" value="Fer4"/>
    <property type="match status" value="2"/>
</dbReference>
<dbReference type="Pfam" id="PF12838">
    <property type="entry name" value="Fer4_7"/>
    <property type="match status" value="3"/>
</dbReference>
<dbReference type="PIRSF" id="PIRSF005658">
    <property type="entry name" value="FwdF"/>
    <property type="match status" value="1"/>
</dbReference>
<dbReference type="SUPFAM" id="SSF54862">
    <property type="entry name" value="4Fe-4S ferredoxins"/>
    <property type="match status" value="3"/>
</dbReference>
<dbReference type="PROSITE" id="PS00198">
    <property type="entry name" value="4FE4S_FER_1"/>
    <property type="match status" value="8"/>
</dbReference>
<dbReference type="PROSITE" id="PS51379">
    <property type="entry name" value="4FE4S_FER_2"/>
    <property type="match status" value="8"/>
</dbReference>
<organism>
    <name type="scientific">Methanocaldococcus jannaschii (strain ATCC 43067 / DSM 2661 / JAL-1 / JCM 10045 / NBRC 100440)</name>
    <name type="common">Methanococcus jannaschii</name>
    <dbReference type="NCBI Taxonomy" id="243232"/>
    <lineage>
        <taxon>Archaea</taxon>
        <taxon>Methanobacteriati</taxon>
        <taxon>Methanobacteriota</taxon>
        <taxon>Methanomada group</taxon>
        <taxon>Methanococci</taxon>
        <taxon>Methanococcales</taxon>
        <taxon>Methanocaldococcaceae</taxon>
        <taxon>Methanocaldococcus</taxon>
    </lineage>
</organism>
<sequence>MIEQIKEVYENGFTIYRDGEVEKRELCWNDELCVGCGICADICPVNAIAMGPLGAIAKGDIIAPKLDIDKDVCVLCGMCASACPFDALDLKINGKSIKEDERYPKIKRDIKVYQDKCVLCEQCEMVCPQGAIVVERELAEREKFVIGEININKEKCVLCGICAEYCPADAINLKYNYPTPSNPKPITDIEVDKDKCVFCKVCEFVCPHDAIEVICYKCPMMKRIPQAKLYEDITGKTVIDKDACVTCGWCAFICPAEAIEVEKPFKGELIIDVNACNACGACISICPCSALEFPKPKDKAEKVPRIIVNQNLCVLCGACAKACPVNAIKVKRTEINFEREPKAIAWKEAFKKLMG</sequence>
<feature type="chain" id="PRO_0000159140" description="Polyferredoxin protein FwdF">
    <location>
        <begin position="1"/>
        <end position="355"/>
    </location>
</feature>
<feature type="domain" description="4Fe-4S ferredoxin-type 1" evidence="2">
    <location>
        <begin position="24"/>
        <end position="53"/>
    </location>
</feature>
<feature type="domain" description="4Fe-4S ferredoxin-type 2" evidence="2">
    <location>
        <begin position="64"/>
        <end position="93"/>
    </location>
</feature>
<feature type="domain" description="4Fe-4S ferredoxin-type 3" evidence="2">
    <location>
        <begin position="108"/>
        <end position="137"/>
    </location>
</feature>
<feature type="domain" description="4Fe-4S ferredoxin-type 4" evidence="2">
    <location>
        <begin position="147"/>
        <end position="176"/>
    </location>
</feature>
<feature type="domain" description="4Fe-4S ferredoxin-type 5" evidence="2">
    <location>
        <begin position="187"/>
        <end position="216"/>
    </location>
</feature>
<feature type="domain" description="4Fe-4S ferredoxin-type 6" evidence="2">
    <location>
        <begin position="235"/>
        <end position="264"/>
    </location>
</feature>
<feature type="domain" description="4Fe-4S ferredoxin-type 7" evidence="2">
    <location>
        <begin position="267"/>
        <end position="296"/>
    </location>
</feature>
<feature type="domain" description="4Fe-4S ferredoxin-type 8" evidence="2">
    <location>
        <begin position="304"/>
        <end position="333"/>
    </location>
</feature>
<feature type="binding site" evidence="1">
    <location>
        <position position="33"/>
    </location>
    <ligand>
        <name>[4Fe-4S] cluster</name>
        <dbReference type="ChEBI" id="CHEBI:49883"/>
    </ligand>
</feature>
<feature type="binding site" evidence="1">
    <location>
        <position position="36"/>
    </location>
    <ligand>
        <name>[4Fe-4S] cluster</name>
        <dbReference type="ChEBI" id="CHEBI:49883"/>
    </ligand>
</feature>
<feature type="binding site" evidence="1">
    <location>
        <position position="39"/>
    </location>
    <ligand>
        <name>[4Fe-4S] cluster</name>
        <dbReference type="ChEBI" id="CHEBI:49883"/>
    </ligand>
</feature>
<feature type="binding site" evidence="1">
    <location>
        <position position="43"/>
    </location>
    <ligand>
        <name>[4Fe-4S] cluster</name>
        <dbReference type="ChEBI" id="CHEBI:49883"/>
    </ligand>
</feature>
<feature type="binding site" evidence="1">
    <location>
        <position position="73"/>
    </location>
    <ligand>
        <name>[4Fe-4S] cluster</name>
        <dbReference type="ChEBI" id="CHEBI:49883"/>
    </ligand>
</feature>
<feature type="binding site" evidence="1">
    <location>
        <position position="76"/>
    </location>
    <ligand>
        <name>[4Fe-4S] cluster</name>
        <dbReference type="ChEBI" id="CHEBI:49883"/>
    </ligand>
</feature>
<feature type="binding site" evidence="1">
    <location>
        <position position="79"/>
    </location>
    <ligand>
        <name>[4Fe-4S] cluster</name>
        <dbReference type="ChEBI" id="CHEBI:49883"/>
    </ligand>
</feature>
<feature type="binding site" evidence="1">
    <location>
        <position position="83"/>
    </location>
    <ligand>
        <name>[4Fe-4S] cluster</name>
        <dbReference type="ChEBI" id="CHEBI:49883"/>
    </ligand>
</feature>
<feature type="binding site" evidence="1">
    <location>
        <position position="117"/>
    </location>
    <ligand>
        <name>[4Fe-4S] cluster</name>
        <dbReference type="ChEBI" id="CHEBI:49883"/>
    </ligand>
</feature>
<feature type="binding site" evidence="1">
    <location>
        <position position="120"/>
    </location>
    <ligand>
        <name>[4Fe-4S] cluster</name>
        <dbReference type="ChEBI" id="CHEBI:49883"/>
    </ligand>
</feature>
<feature type="binding site" evidence="1">
    <location>
        <position position="123"/>
    </location>
    <ligand>
        <name>[4Fe-4S] cluster</name>
        <dbReference type="ChEBI" id="CHEBI:49883"/>
    </ligand>
</feature>
<feature type="binding site" evidence="1">
    <location>
        <position position="127"/>
    </location>
    <ligand>
        <name>[4Fe-4S] cluster</name>
        <dbReference type="ChEBI" id="CHEBI:49883"/>
    </ligand>
</feature>
<feature type="binding site" evidence="1">
    <location>
        <position position="156"/>
    </location>
    <ligand>
        <name>[4Fe-4S] cluster</name>
        <dbReference type="ChEBI" id="CHEBI:49883"/>
    </ligand>
</feature>
<feature type="binding site" evidence="1">
    <location>
        <position position="159"/>
    </location>
    <ligand>
        <name>[4Fe-4S] cluster</name>
        <dbReference type="ChEBI" id="CHEBI:49883"/>
    </ligand>
</feature>
<feature type="binding site" evidence="1">
    <location>
        <position position="162"/>
    </location>
    <ligand>
        <name>[4Fe-4S] cluster</name>
        <dbReference type="ChEBI" id="CHEBI:49883"/>
    </ligand>
</feature>
<feature type="binding site" evidence="1">
    <location>
        <position position="166"/>
    </location>
    <ligand>
        <name>[4Fe-4S] cluster</name>
        <dbReference type="ChEBI" id="CHEBI:49883"/>
    </ligand>
</feature>
<feature type="binding site" evidence="1">
    <location>
        <position position="196"/>
    </location>
    <ligand>
        <name>[4Fe-4S] cluster</name>
        <dbReference type="ChEBI" id="CHEBI:49883"/>
    </ligand>
</feature>
<feature type="binding site" evidence="1">
    <location>
        <position position="199"/>
    </location>
    <ligand>
        <name>[4Fe-4S] cluster</name>
        <dbReference type="ChEBI" id="CHEBI:49883"/>
    </ligand>
</feature>
<feature type="binding site" evidence="1">
    <location>
        <position position="202"/>
    </location>
    <ligand>
        <name>[4Fe-4S] cluster</name>
        <dbReference type="ChEBI" id="CHEBI:49883"/>
    </ligand>
</feature>
<feature type="binding site" evidence="1">
    <location>
        <position position="206"/>
    </location>
    <ligand>
        <name>[4Fe-4S] cluster</name>
        <dbReference type="ChEBI" id="CHEBI:49883"/>
    </ligand>
</feature>
<feature type="binding site" evidence="1">
    <location>
        <position position="244"/>
    </location>
    <ligand>
        <name>[4Fe-4S] cluster</name>
        <dbReference type="ChEBI" id="CHEBI:49883"/>
    </ligand>
</feature>
<feature type="binding site" evidence="1">
    <location>
        <position position="247"/>
    </location>
    <ligand>
        <name>[4Fe-4S] cluster</name>
        <dbReference type="ChEBI" id="CHEBI:49883"/>
    </ligand>
</feature>
<feature type="binding site" evidence="1">
    <location>
        <position position="250"/>
    </location>
    <ligand>
        <name>[4Fe-4S] cluster</name>
        <dbReference type="ChEBI" id="CHEBI:49883"/>
    </ligand>
</feature>
<feature type="binding site" evidence="1">
    <location>
        <position position="254"/>
    </location>
    <ligand>
        <name>[4Fe-4S] cluster</name>
        <dbReference type="ChEBI" id="CHEBI:49883"/>
    </ligand>
</feature>
<feature type="binding site" evidence="1">
    <location>
        <position position="276"/>
    </location>
    <ligand>
        <name>[4Fe-4S] cluster</name>
        <dbReference type="ChEBI" id="CHEBI:49883"/>
    </ligand>
</feature>
<feature type="binding site" evidence="1">
    <location>
        <position position="279"/>
    </location>
    <ligand>
        <name>[4Fe-4S] cluster</name>
        <dbReference type="ChEBI" id="CHEBI:49883"/>
    </ligand>
</feature>
<feature type="binding site" evidence="1">
    <location>
        <position position="282"/>
    </location>
    <ligand>
        <name>[4Fe-4S] cluster</name>
        <dbReference type="ChEBI" id="CHEBI:49883"/>
    </ligand>
</feature>
<feature type="binding site" evidence="1">
    <location>
        <position position="286"/>
    </location>
    <ligand>
        <name>[4Fe-4S] cluster</name>
        <dbReference type="ChEBI" id="CHEBI:49883"/>
    </ligand>
</feature>
<feature type="binding site" evidence="1">
    <location>
        <position position="313"/>
    </location>
    <ligand>
        <name>[4Fe-4S] cluster</name>
        <dbReference type="ChEBI" id="CHEBI:49883"/>
    </ligand>
</feature>
<feature type="binding site" evidence="1">
    <location>
        <position position="316"/>
    </location>
    <ligand>
        <name>[4Fe-4S] cluster</name>
        <dbReference type="ChEBI" id="CHEBI:49883"/>
    </ligand>
</feature>
<feature type="binding site" evidence="1">
    <location>
        <position position="319"/>
    </location>
    <ligand>
        <name>[4Fe-4S] cluster</name>
        <dbReference type="ChEBI" id="CHEBI:49883"/>
    </ligand>
</feature>
<feature type="binding site" evidence="1">
    <location>
        <position position="323"/>
    </location>
    <ligand>
        <name>[4Fe-4S] cluster</name>
        <dbReference type="ChEBI" id="CHEBI:49883"/>
    </ligand>
</feature>
<gene>
    <name type="primary">fwdF</name>
    <name type="ordered locus">MJ1166</name>
</gene>
<proteinExistence type="predicted"/>
<name>FWDF_METJA</name>
<protein>
    <recommendedName>
        <fullName>Polyferredoxin protein FwdF</fullName>
    </recommendedName>
</protein>
<reference key="1">
    <citation type="journal article" date="1996" name="Science">
        <title>Complete genome sequence of the methanogenic archaeon, Methanococcus jannaschii.</title>
        <authorList>
            <person name="Bult C.J."/>
            <person name="White O."/>
            <person name="Olsen G.J."/>
            <person name="Zhou L."/>
            <person name="Fleischmann R.D."/>
            <person name="Sutton G.G."/>
            <person name="Blake J.A."/>
            <person name="FitzGerald L.M."/>
            <person name="Clayton R.A."/>
            <person name="Gocayne J.D."/>
            <person name="Kerlavage A.R."/>
            <person name="Dougherty B.A."/>
            <person name="Tomb J.-F."/>
            <person name="Adams M.D."/>
            <person name="Reich C.I."/>
            <person name="Overbeek R."/>
            <person name="Kirkness E.F."/>
            <person name="Weinstock K.G."/>
            <person name="Merrick J.M."/>
            <person name="Glodek A."/>
            <person name="Scott J.L."/>
            <person name="Geoghagen N.S.M."/>
            <person name="Weidman J.F."/>
            <person name="Fuhrmann J.L."/>
            <person name="Nguyen D."/>
            <person name="Utterback T.R."/>
            <person name="Kelley J.M."/>
            <person name="Peterson J.D."/>
            <person name="Sadow P.W."/>
            <person name="Hanna M.C."/>
            <person name="Cotton M.D."/>
            <person name="Roberts K.M."/>
            <person name="Hurst M.A."/>
            <person name="Kaine B.P."/>
            <person name="Borodovsky M."/>
            <person name="Klenk H.-P."/>
            <person name="Fraser C.M."/>
            <person name="Smith H.O."/>
            <person name="Woese C.R."/>
            <person name="Venter J.C."/>
        </authorList>
    </citation>
    <scope>NUCLEOTIDE SEQUENCE [LARGE SCALE GENOMIC DNA]</scope>
    <source>
        <strain>ATCC 43067 / DSM 2661 / JAL-1 / JCM 10045 / NBRC 100440</strain>
    </source>
</reference>
<accession>Q58566</accession>
<evidence type="ECO:0000255" key="1"/>
<evidence type="ECO:0000255" key="2">
    <source>
        <dbReference type="PROSITE-ProRule" id="PRU00711"/>
    </source>
</evidence>
<evidence type="ECO:0000305" key="3"/>